<accession>O27642</accession>
<feature type="chain" id="PRO_0000153641" description="Probable deoxyuridine 5'-triphosphate nucleotidohydrolase">
    <location>
        <begin position="1"/>
        <end position="150"/>
    </location>
</feature>
<dbReference type="EC" id="3.6.1.23" evidence="1"/>
<dbReference type="EMBL" id="AE000666">
    <property type="protein sequence ID" value="AAB86078.1"/>
    <property type="molecule type" value="Genomic_DNA"/>
</dbReference>
<dbReference type="PIR" id="D69081">
    <property type="entry name" value="D69081"/>
</dbReference>
<dbReference type="SMR" id="O27642"/>
<dbReference type="FunCoup" id="O27642">
    <property type="interactions" value="22"/>
</dbReference>
<dbReference type="STRING" id="187420.MTH_1605"/>
<dbReference type="PaxDb" id="187420-MTH_1605"/>
<dbReference type="EnsemblBacteria" id="AAB86078">
    <property type="protein sequence ID" value="AAB86078"/>
    <property type="gene ID" value="MTH_1605"/>
</dbReference>
<dbReference type="KEGG" id="mth:MTH_1605"/>
<dbReference type="PATRIC" id="fig|187420.15.peg.1569"/>
<dbReference type="HOGENOM" id="CLU_103451_2_0_2"/>
<dbReference type="InParanoid" id="O27642"/>
<dbReference type="UniPathway" id="UPA00610">
    <property type="reaction ID" value="UER00666"/>
</dbReference>
<dbReference type="Proteomes" id="UP000005223">
    <property type="component" value="Chromosome"/>
</dbReference>
<dbReference type="GO" id="GO:0008829">
    <property type="term" value="F:dCTP deaminase activity"/>
    <property type="evidence" value="ECO:0007669"/>
    <property type="project" value="InterPro"/>
</dbReference>
<dbReference type="GO" id="GO:0004170">
    <property type="term" value="F:dUTP diphosphatase activity"/>
    <property type="evidence" value="ECO:0007669"/>
    <property type="project" value="UniProtKB-UniRule"/>
</dbReference>
<dbReference type="GO" id="GO:0006226">
    <property type="term" value="P:dUMP biosynthetic process"/>
    <property type="evidence" value="ECO:0007669"/>
    <property type="project" value="UniProtKB-UniRule"/>
</dbReference>
<dbReference type="GO" id="GO:0006229">
    <property type="term" value="P:dUTP biosynthetic process"/>
    <property type="evidence" value="ECO:0007669"/>
    <property type="project" value="InterPro"/>
</dbReference>
<dbReference type="CDD" id="cd07557">
    <property type="entry name" value="trimeric_dUTPase"/>
    <property type="match status" value="1"/>
</dbReference>
<dbReference type="Gene3D" id="2.70.40.10">
    <property type="match status" value="1"/>
</dbReference>
<dbReference type="HAMAP" id="MF_00635">
    <property type="entry name" value="dUTPase_arch"/>
    <property type="match status" value="1"/>
</dbReference>
<dbReference type="InterPro" id="IPR011962">
    <property type="entry name" value="dCTP_deaminase"/>
</dbReference>
<dbReference type="InterPro" id="IPR036157">
    <property type="entry name" value="dUTPase-like_sf"/>
</dbReference>
<dbReference type="InterPro" id="IPR023537">
    <property type="entry name" value="dUTPase_archaeal"/>
</dbReference>
<dbReference type="InterPro" id="IPR033704">
    <property type="entry name" value="dUTPase_trimeric"/>
</dbReference>
<dbReference type="PANTHER" id="PTHR42680">
    <property type="entry name" value="DCTP DEAMINASE"/>
    <property type="match status" value="1"/>
</dbReference>
<dbReference type="PANTHER" id="PTHR42680:SF1">
    <property type="entry name" value="DEOXYURIDINE 5'-TRIPHOSPHATE NUCLEOTIDOHYDROLASE"/>
    <property type="match status" value="1"/>
</dbReference>
<dbReference type="Pfam" id="PF22769">
    <property type="entry name" value="DCD"/>
    <property type="match status" value="1"/>
</dbReference>
<dbReference type="SUPFAM" id="SSF51283">
    <property type="entry name" value="dUTPase-like"/>
    <property type="match status" value="1"/>
</dbReference>
<sequence length="150" mass="16997">MMIGEQLLKKLFPDFEELVQPAGIDLRVDKVYRQMGPGSLIDDEKNLPPLEMLEPPIYRLEPGKAYLASVDRMIEIPEGYAMLYLPRSTLLRSFVSVQTAVGDPGFRGTLQFLLHNHGEYEYTLKRGERIVQAVVFPVEGSGKYSGSYQE</sequence>
<organism>
    <name type="scientific">Methanothermobacter thermautotrophicus (strain ATCC 29096 / DSM 1053 / JCM 10044 / NBRC 100330 / Delta H)</name>
    <name type="common">Methanobacterium thermoautotrophicum</name>
    <dbReference type="NCBI Taxonomy" id="187420"/>
    <lineage>
        <taxon>Archaea</taxon>
        <taxon>Methanobacteriati</taxon>
        <taxon>Methanobacteriota</taxon>
        <taxon>Methanomada group</taxon>
        <taxon>Methanobacteria</taxon>
        <taxon>Methanobacteriales</taxon>
        <taxon>Methanobacteriaceae</taxon>
        <taxon>Methanothermobacter</taxon>
    </lineage>
</organism>
<name>DUT_METTH</name>
<reference key="1">
    <citation type="journal article" date="1997" name="J. Bacteriol.">
        <title>Complete genome sequence of Methanobacterium thermoautotrophicum deltaH: functional analysis and comparative genomics.</title>
        <authorList>
            <person name="Smith D.R."/>
            <person name="Doucette-Stamm L.A."/>
            <person name="Deloughery C."/>
            <person name="Lee H.-M."/>
            <person name="Dubois J."/>
            <person name="Aldredge T."/>
            <person name="Bashirzadeh R."/>
            <person name="Blakely D."/>
            <person name="Cook R."/>
            <person name="Gilbert K."/>
            <person name="Harrison D."/>
            <person name="Hoang L."/>
            <person name="Keagle P."/>
            <person name="Lumm W."/>
            <person name="Pothier B."/>
            <person name="Qiu D."/>
            <person name="Spadafora R."/>
            <person name="Vicare R."/>
            <person name="Wang Y."/>
            <person name="Wierzbowski J."/>
            <person name="Gibson R."/>
            <person name="Jiwani N."/>
            <person name="Caruso A."/>
            <person name="Bush D."/>
            <person name="Safer H."/>
            <person name="Patwell D."/>
            <person name="Prabhakar S."/>
            <person name="McDougall S."/>
            <person name="Shimer G."/>
            <person name="Goyal A."/>
            <person name="Pietrovski S."/>
            <person name="Church G.M."/>
            <person name="Daniels C.J."/>
            <person name="Mao J.-I."/>
            <person name="Rice P."/>
            <person name="Noelling J."/>
            <person name="Reeve J.N."/>
        </authorList>
    </citation>
    <scope>NUCLEOTIDE SEQUENCE [LARGE SCALE GENOMIC DNA]</scope>
    <source>
        <strain>ATCC 29096 / DSM 1053 / JCM 10044 / NBRC 100330 / Delta H</strain>
    </source>
</reference>
<protein>
    <recommendedName>
        <fullName evidence="1">Probable deoxyuridine 5'-triphosphate nucleotidohydrolase</fullName>
        <shortName evidence="1">dUTPase</shortName>
        <ecNumber evidence="1">3.6.1.23</ecNumber>
    </recommendedName>
    <alternativeName>
        <fullName evidence="1">dUTP pyrophosphatase</fullName>
    </alternativeName>
</protein>
<gene>
    <name evidence="1" type="primary">dut</name>
    <name type="ordered locus">MTH_1605</name>
</gene>
<evidence type="ECO:0000255" key="1">
    <source>
        <dbReference type="HAMAP-Rule" id="MF_00635"/>
    </source>
</evidence>
<keyword id="KW-0378">Hydrolase</keyword>
<keyword id="KW-0546">Nucleotide metabolism</keyword>
<keyword id="KW-1185">Reference proteome</keyword>
<comment type="function">
    <text evidence="1">This enzyme is involved in nucleotide metabolism: it produces dUMP, the immediate precursor of thymidine nucleotides and it decreases the intracellular concentration of dUTP so that uracil cannot be incorporated into DNA.</text>
</comment>
<comment type="catalytic activity">
    <reaction evidence="1">
        <text>dUTP + H2O = dUMP + diphosphate + H(+)</text>
        <dbReference type="Rhea" id="RHEA:10248"/>
        <dbReference type="ChEBI" id="CHEBI:15377"/>
        <dbReference type="ChEBI" id="CHEBI:15378"/>
        <dbReference type="ChEBI" id="CHEBI:33019"/>
        <dbReference type="ChEBI" id="CHEBI:61555"/>
        <dbReference type="ChEBI" id="CHEBI:246422"/>
        <dbReference type="EC" id="3.6.1.23"/>
    </reaction>
</comment>
<comment type="pathway">
    <text evidence="1">Pyrimidine metabolism; dUMP biosynthesis; dUMP from dCTP (dUTP route): step 2/2.</text>
</comment>
<comment type="similarity">
    <text evidence="1">Belongs to the dCTP deaminase family. Archaeal dUTPase subfamily.</text>
</comment>
<proteinExistence type="inferred from homology"/>